<protein>
    <recommendedName>
        <fullName evidence="1">Isoleucine--tRNA ligase</fullName>
        <ecNumber evidence="1">6.1.1.5</ecNumber>
    </recommendedName>
    <alternativeName>
        <fullName evidence="1">Isoleucyl-tRNA synthetase</fullName>
        <shortName evidence="1">IleRS</shortName>
    </alternativeName>
</protein>
<feature type="chain" id="PRO_0000098570" description="Isoleucine--tRNA ligase">
    <location>
        <begin position="1"/>
        <end position="1056"/>
    </location>
</feature>
<feature type="region of interest" description="Disordered" evidence="2">
    <location>
        <begin position="1"/>
        <end position="26"/>
    </location>
</feature>
<feature type="short sequence motif" description="'HIGH' region">
    <location>
        <begin position="63"/>
        <end position="73"/>
    </location>
</feature>
<feature type="short sequence motif" description="'KMSKS' region">
    <location>
        <begin position="632"/>
        <end position="636"/>
    </location>
</feature>
<feature type="compositionally biased region" description="Polar residues" evidence="2">
    <location>
        <begin position="1"/>
        <end position="13"/>
    </location>
</feature>
<feature type="binding site" evidence="1">
    <location>
        <position position="635"/>
    </location>
    <ligand>
        <name>ATP</name>
        <dbReference type="ChEBI" id="CHEBI:30616"/>
    </ligand>
</feature>
<comment type="function">
    <text evidence="1">Catalyzes the attachment of isoleucine to tRNA(Ile). As IleRS can inadvertently accommodate and process structurally similar amino acids such as valine, to avoid such errors it has two additional distinct tRNA(Ile)-dependent editing activities. One activity is designated as 'pretransfer' editing and involves the hydrolysis of activated Val-AMP. The other activity is designated 'posttransfer' editing and involves deacylation of mischarged Val-tRNA(Ile).</text>
</comment>
<comment type="catalytic activity">
    <reaction evidence="1">
        <text>tRNA(Ile) + L-isoleucine + ATP = L-isoleucyl-tRNA(Ile) + AMP + diphosphate</text>
        <dbReference type="Rhea" id="RHEA:11060"/>
        <dbReference type="Rhea" id="RHEA-COMP:9666"/>
        <dbReference type="Rhea" id="RHEA-COMP:9695"/>
        <dbReference type="ChEBI" id="CHEBI:30616"/>
        <dbReference type="ChEBI" id="CHEBI:33019"/>
        <dbReference type="ChEBI" id="CHEBI:58045"/>
        <dbReference type="ChEBI" id="CHEBI:78442"/>
        <dbReference type="ChEBI" id="CHEBI:78528"/>
        <dbReference type="ChEBI" id="CHEBI:456215"/>
        <dbReference type="EC" id="6.1.1.5"/>
    </reaction>
</comment>
<comment type="cofactor">
    <cofactor evidence="1">
        <name>Zn(2+)</name>
        <dbReference type="ChEBI" id="CHEBI:29105"/>
    </cofactor>
</comment>
<comment type="subunit">
    <text evidence="1">Monomer.</text>
</comment>
<comment type="subcellular location">
    <subcellularLocation>
        <location evidence="1">Cytoplasm</location>
    </subcellularLocation>
</comment>
<comment type="domain">
    <text evidence="1">IleRS has two distinct active sites: one for aminoacylation and one for editing. The misactivated valine is translocated from the active site to the editing site, which sterically excludes the correctly activated isoleucine. The single editing site contains two valyl binding pockets, one specific for each substrate (Val-AMP or Val-tRNA(Ile)).</text>
</comment>
<comment type="similarity">
    <text evidence="1">Belongs to the class-I aminoacyl-tRNA synthetase family. IleS type 2 subfamily.</text>
</comment>
<dbReference type="EC" id="6.1.1.5" evidence="1"/>
<dbReference type="EMBL" id="BX251411">
    <property type="protein sequence ID" value="CAD66961.1"/>
    <property type="molecule type" value="Genomic_DNA"/>
</dbReference>
<dbReference type="RefSeq" id="WP_011096241.1">
    <property type="nucleotide sequence ID" value="NC_004551.1"/>
</dbReference>
<dbReference type="SMR" id="Q83I16"/>
<dbReference type="GeneID" id="67388063"/>
<dbReference type="KEGG" id="tws:TW287"/>
<dbReference type="HOGENOM" id="CLU_001493_1_1_11"/>
<dbReference type="GO" id="GO:0005737">
    <property type="term" value="C:cytoplasm"/>
    <property type="evidence" value="ECO:0007669"/>
    <property type="project" value="UniProtKB-SubCell"/>
</dbReference>
<dbReference type="GO" id="GO:0002161">
    <property type="term" value="F:aminoacyl-tRNA deacylase activity"/>
    <property type="evidence" value="ECO:0007669"/>
    <property type="project" value="InterPro"/>
</dbReference>
<dbReference type="GO" id="GO:0005524">
    <property type="term" value="F:ATP binding"/>
    <property type="evidence" value="ECO:0007669"/>
    <property type="project" value="UniProtKB-UniRule"/>
</dbReference>
<dbReference type="GO" id="GO:0004822">
    <property type="term" value="F:isoleucine-tRNA ligase activity"/>
    <property type="evidence" value="ECO:0007669"/>
    <property type="project" value="UniProtKB-UniRule"/>
</dbReference>
<dbReference type="GO" id="GO:0000049">
    <property type="term" value="F:tRNA binding"/>
    <property type="evidence" value="ECO:0007669"/>
    <property type="project" value="InterPro"/>
</dbReference>
<dbReference type="GO" id="GO:0008270">
    <property type="term" value="F:zinc ion binding"/>
    <property type="evidence" value="ECO:0007669"/>
    <property type="project" value="UniProtKB-UniRule"/>
</dbReference>
<dbReference type="GO" id="GO:0006428">
    <property type="term" value="P:isoleucyl-tRNA aminoacylation"/>
    <property type="evidence" value="ECO:0007669"/>
    <property type="project" value="UniProtKB-UniRule"/>
</dbReference>
<dbReference type="CDD" id="cd07961">
    <property type="entry name" value="Anticodon_Ia_Ile_ABEc"/>
    <property type="match status" value="1"/>
</dbReference>
<dbReference type="FunFam" id="3.40.50.620:FF:000063">
    <property type="entry name" value="Isoleucine--tRNA ligase"/>
    <property type="match status" value="1"/>
</dbReference>
<dbReference type="FunFam" id="3.40.50.620:FF:000075">
    <property type="entry name" value="Isoleucine--tRNA ligase"/>
    <property type="match status" value="1"/>
</dbReference>
<dbReference type="Gene3D" id="3.40.50.620">
    <property type="entry name" value="HUPs"/>
    <property type="match status" value="2"/>
</dbReference>
<dbReference type="Gene3D" id="1.10.730.10">
    <property type="entry name" value="Isoleucyl-tRNA Synthetase, Domain 1"/>
    <property type="match status" value="1"/>
</dbReference>
<dbReference type="HAMAP" id="MF_02003">
    <property type="entry name" value="Ile_tRNA_synth_type2"/>
    <property type="match status" value="1"/>
</dbReference>
<dbReference type="InterPro" id="IPR002300">
    <property type="entry name" value="aa-tRNA-synth_Ia"/>
</dbReference>
<dbReference type="InterPro" id="IPR033709">
    <property type="entry name" value="Anticodon_Ile_ABEc"/>
</dbReference>
<dbReference type="InterPro" id="IPR002301">
    <property type="entry name" value="Ile-tRNA-ligase"/>
</dbReference>
<dbReference type="InterPro" id="IPR023586">
    <property type="entry name" value="Ile-tRNA-ligase_type2"/>
</dbReference>
<dbReference type="InterPro" id="IPR013155">
    <property type="entry name" value="M/V/L/I-tRNA-synth_anticd-bd"/>
</dbReference>
<dbReference type="InterPro" id="IPR014729">
    <property type="entry name" value="Rossmann-like_a/b/a_fold"/>
</dbReference>
<dbReference type="InterPro" id="IPR009080">
    <property type="entry name" value="tRNAsynth_Ia_anticodon-bd"/>
</dbReference>
<dbReference type="InterPro" id="IPR009008">
    <property type="entry name" value="Val/Leu/Ile-tRNA-synth_edit"/>
</dbReference>
<dbReference type="NCBIfam" id="TIGR00392">
    <property type="entry name" value="ileS"/>
    <property type="match status" value="1"/>
</dbReference>
<dbReference type="PANTHER" id="PTHR42780:SF1">
    <property type="entry name" value="ISOLEUCINE--TRNA LIGASE, CYTOPLASMIC"/>
    <property type="match status" value="1"/>
</dbReference>
<dbReference type="PANTHER" id="PTHR42780">
    <property type="entry name" value="SOLEUCYL-TRNA SYNTHETASE"/>
    <property type="match status" value="1"/>
</dbReference>
<dbReference type="Pfam" id="PF08264">
    <property type="entry name" value="Anticodon_1"/>
    <property type="match status" value="1"/>
</dbReference>
<dbReference type="Pfam" id="PF19302">
    <property type="entry name" value="DUF5915"/>
    <property type="match status" value="1"/>
</dbReference>
<dbReference type="Pfam" id="PF00133">
    <property type="entry name" value="tRNA-synt_1"/>
    <property type="match status" value="1"/>
</dbReference>
<dbReference type="PRINTS" id="PR00984">
    <property type="entry name" value="TRNASYNTHILE"/>
</dbReference>
<dbReference type="SUPFAM" id="SSF47323">
    <property type="entry name" value="Anticodon-binding domain of a subclass of class I aminoacyl-tRNA synthetases"/>
    <property type="match status" value="2"/>
</dbReference>
<dbReference type="SUPFAM" id="SSF52374">
    <property type="entry name" value="Nucleotidylyl transferase"/>
    <property type="match status" value="1"/>
</dbReference>
<dbReference type="SUPFAM" id="SSF50677">
    <property type="entry name" value="ValRS/IleRS/LeuRS editing domain"/>
    <property type="match status" value="1"/>
</dbReference>
<sequence>MCDQGEVSSQNSSDYKEQRPTPRPNLPKIEESVLAFWSSDKTFEASLEQRQHGKRWVFYDGPPFANGLPHFGHLLTGYIKDAIPRYQTMRGQYVPRVFGWDTHGLPAELEAMKRLGITEKSQIESMGIASFNEAARKSVLTYVDQWEEYVNRQARWVDFKNGYKTLDLDYMESVLWAFKTLYKKGVIYEGYKVLPYCWNDQTPLSNHELRMDDEVYKQRLDDSLTVTFPLIGQKAKTCGLDGVAALAWTTTPWTLPSNMALIVSPNVEYVVVSSARQNSNSDFLLCKSSLDSYAECLGYESGQDARASIRRTLLGKEIEGIHYKPLFDYYADLHNAFTILSDNYVDVTEGTGIVHASPAHGEDDKRVCDAFGVPTVVSINDAACFTDVISNYAGMHIFDANAVIRSDLSRDGRILRHESYKHSYPHCWRCRSPLIYKAVTSWFFRITDSVNRMLELNQQINWVPKSVKNGQFAKWLSSAKDWSISRTRYWGTPIPVWKSDNPEYPRIDCYGSLKELEDDFGIKLTDLHRPEIDRLTRPNPDDPTGASTMRRVPDVLDVWFDAASMPFAQLHYPFENIERFEANKSADFIVEYAGQIRGWFYLLHAMSTALFDGVAFKNAICHGIVLGDDGQKASKSLRNYPDVYDVFENEGSDAVRWYLISSSILRGGSLIVSRKKIQDAIRQYITPLWSSWYFFHIYSEAARPGGYKARFSVDSQDILDRYILSKTGLLVEDVTRFMDSFDMASAALQLRDFVAVLTNWYIRRSRDRFWDGSDTGAFDTLYTVLETLCRLGAVFVPMVSEHVYKCLTNSRSVHLSDWPDVATFPNETGLVETMDRVRKICSTGLSLRKRLGIKARQPLSSAHIRVAQVGSLAQYKDIISGELNVKTVSIEEGSCTQRMLKILPRVAGPRLAGDVQTVIAAARRGDWTDHDGHVTAGGIPLLENEYQLVAGAQDSKNSQPLPFGGSVTLDTRIDETLRSEGVARDTVRQIQIARKEKDLNITDRISLEVCVPDEQVKNNLLAFSELICKETLCDRLDILVKKGIDGITVSLEKFRQ</sequence>
<keyword id="KW-0030">Aminoacyl-tRNA synthetase</keyword>
<keyword id="KW-0067">ATP-binding</keyword>
<keyword id="KW-0963">Cytoplasm</keyword>
<keyword id="KW-0436">Ligase</keyword>
<keyword id="KW-0479">Metal-binding</keyword>
<keyword id="KW-0547">Nucleotide-binding</keyword>
<keyword id="KW-0648">Protein biosynthesis</keyword>
<keyword id="KW-0862">Zinc</keyword>
<accession>Q83I16</accession>
<proteinExistence type="inferred from homology"/>
<evidence type="ECO:0000255" key="1">
    <source>
        <dbReference type="HAMAP-Rule" id="MF_02003"/>
    </source>
</evidence>
<evidence type="ECO:0000256" key="2">
    <source>
        <dbReference type="SAM" id="MobiDB-lite"/>
    </source>
</evidence>
<organism>
    <name type="scientific">Tropheryma whipplei (strain TW08/27)</name>
    <name type="common">Whipple's bacillus</name>
    <dbReference type="NCBI Taxonomy" id="218496"/>
    <lineage>
        <taxon>Bacteria</taxon>
        <taxon>Bacillati</taxon>
        <taxon>Actinomycetota</taxon>
        <taxon>Actinomycetes</taxon>
        <taxon>Micrococcales</taxon>
        <taxon>Tropherymataceae</taxon>
        <taxon>Tropheryma</taxon>
    </lineage>
</organism>
<reference key="1">
    <citation type="journal article" date="2003" name="Lancet">
        <title>Sequencing and analysis of the genome of the Whipple's disease bacterium Tropheryma whipplei.</title>
        <authorList>
            <person name="Bentley S.D."/>
            <person name="Maiwald M."/>
            <person name="Murphy L.D."/>
            <person name="Pallen M.J."/>
            <person name="Yeats C.A."/>
            <person name="Dover L.G."/>
            <person name="Norbertczak H.T."/>
            <person name="Besra G.S."/>
            <person name="Quail M.A."/>
            <person name="Harris D.E."/>
            <person name="von Herbay A."/>
            <person name="Goble A."/>
            <person name="Rutter S."/>
            <person name="Squares R."/>
            <person name="Squares S."/>
            <person name="Barrell B.G."/>
            <person name="Parkhill J."/>
            <person name="Relman D.A."/>
        </authorList>
    </citation>
    <scope>NUCLEOTIDE SEQUENCE [LARGE SCALE GENOMIC DNA]</scope>
    <source>
        <strain>TW08/27</strain>
    </source>
</reference>
<name>SYI_TROW8</name>
<gene>
    <name evidence="1" type="primary">ileS</name>
    <name type="ordered locus">TW287</name>
</gene>